<sequence length="244" mass="26593">MPRPSPCADSGGGMMTTLTARPEAITFDPQQTALIVVDMQNAYATPGGYLDLAGFDVSTTRPVIANIQTAVTAARTAGMLIIWFQNGWDEQYVEAGGPGSPNFHKSNALKTMRNQPQLQGKLLAKGSWDYQLVDELVPQPGDIVLPKPRYSGFFNTPLDSILRSRGIRHLVFTGIATNVCVESTLRDGFFLEYFGVVLEDATHQAGPEFAQKAALFNIETFFGWVSDVETFCDALSSTSFARIA</sequence>
<organism>
    <name type="scientific">Escherichia coli O6:H1 (strain CFT073 / ATCC 700928 / UPEC)</name>
    <dbReference type="NCBI Taxonomy" id="199310"/>
    <lineage>
        <taxon>Bacteria</taxon>
        <taxon>Pseudomonadati</taxon>
        <taxon>Pseudomonadota</taxon>
        <taxon>Gammaproteobacteria</taxon>
        <taxon>Enterobacterales</taxon>
        <taxon>Enterobacteriaceae</taxon>
        <taxon>Escherichia</taxon>
    </lineage>
</organism>
<proteinExistence type="inferred from homology"/>
<feature type="chain" id="PRO_0000402681" description="Ureidoacrylate amidohydrolase RutB">
    <location>
        <begin position="1"/>
        <end position="244"/>
    </location>
</feature>
<feature type="active site" description="Proton acceptor" evidence="1">
    <location>
        <position position="38"/>
    </location>
</feature>
<feature type="active site" evidence="1">
    <location>
        <position position="147"/>
    </location>
</feature>
<feature type="active site" description="Nucleophile" evidence="1">
    <location>
        <position position="180"/>
    </location>
</feature>
<comment type="function">
    <text evidence="1">Hydrolyzes ureidoacrylate to form aminoacrylate and carbamate. The carbamate hydrolyzes spontaneously, thereby releasing one of the nitrogen atoms of the pyrimidine ring as ammonia and one of its carbon atoms as CO2.</text>
</comment>
<comment type="catalytic activity">
    <reaction evidence="1">
        <text>(Z)-3-ureidoacrylate + H2O + H(+) = (Z)-3-aminoacrylate + NH4(+) + CO2</text>
        <dbReference type="Rhea" id="RHEA:42624"/>
        <dbReference type="ChEBI" id="CHEBI:15377"/>
        <dbReference type="ChEBI" id="CHEBI:15378"/>
        <dbReference type="ChEBI" id="CHEBI:16526"/>
        <dbReference type="ChEBI" id="CHEBI:28938"/>
        <dbReference type="ChEBI" id="CHEBI:59891"/>
        <dbReference type="ChEBI" id="CHEBI:59894"/>
        <dbReference type="EC" id="3.5.1.110"/>
    </reaction>
</comment>
<comment type="catalytic activity">
    <reaction evidence="1">
        <text>(Z)-3-ureidoacrylate + H2O = (Z)-3-aminoacrylate + carbamate + H(+)</text>
        <dbReference type="Rhea" id="RHEA:31603"/>
        <dbReference type="ChEBI" id="CHEBI:13941"/>
        <dbReference type="ChEBI" id="CHEBI:15377"/>
        <dbReference type="ChEBI" id="CHEBI:15378"/>
        <dbReference type="ChEBI" id="CHEBI:59891"/>
        <dbReference type="ChEBI" id="CHEBI:59894"/>
    </reaction>
</comment>
<comment type="catalytic activity">
    <reaction evidence="1">
        <text>(Z)-2-methylureidoacrylate + H2O + H(+) = (Z)-2-methylaminoacrylate + NH4(+) + CO2</text>
        <dbReference type="Rhea" id="RHEA:42620"/>
        <dbReference type="ChEBI" id="CHEBI:15377"/>
        <dbReference type="ChEBI" id="CHEBI:15378"/>
        <dbReference type="ChEBI" id="CHEBI:16526"/>
        <dbReference type="ChEBI" id="CHEBI:28938"/>
        <dbReference type="ChEBI" id="CHEBI:143783"/>
        <dbReference type="ChEBI" id="CHEBI:145735"/>
        <dbReference type="EC" id="3.5.1.110"/>
    </reaction>
</comment>
<comment type="induction">
    <text evidence="1">Up-regulated by the nitrogen regulatory protein C (NtrC also called GlnG) and repressed by RutR.</text>
</comment>
<comment type="similarity">
    <text evidence="1">Belongs to the isochorismatase family. RutB subfamily.</text>
</comment>
<protein>
    <recommendedName>
        <fullName evidence="1">Ureidoacrylate amidohydrolase RutB</fullName>
        <ecNumber evidence="1">3.5.1.110</ecNumber>
    </recommendedName>
</protein>
<name>RUTB_ECOL6</name>
<gene>
    <name evidence="1" type="primary">rutB</name>
    <name type="ordered locus">c1148</name>
</gene>
<dbReference type="EC" id="3.5.1.110" evidence="1"/>
<dbReference type="EMBL" id="AE014075">
    <property type="protein sequence ID" value="AAN79616.1"/>
    <property type="molecule type" value="Genomic_DNA"/>
</dbReference>
<dbReference type="SMR" id="Q8FJ42"/>
<dbReference type="STRING" id="199310.c1148"/>
<dbReference type="KEGG" id="ecc:c1148"/>
<dbReference type="eggNOG" id="COG1335">
    <property type="taxonomic scope" value="Bacteria"/>
</dbReference>
<dbReference type="HOGENOM" id="CLU_068979_8_0_6"/>
<dbReference type="BioCyc" id="ECOL199310:C1148-MONOMER"/>
<dbReference type="Proteomes" id="UP000001410">
    <property type="component" value="Chromosome"/>
</dbReference>
<dbReference type="GO" id="GO:0016811">
    <property type="term" value="F:hydrolase activity, acting on carbon-nitrogen (but not peptide) bonds, in linear amides"/>
    <property type="evidence" value="ECO:0007669"/>
    <property type="project" value="UniProtKB-UniRule"/>
</dbReference>
<dbReference type="GO" id="GO:0019740">
    <property type="term" value="P:nitrogen utilization"/>
    <property type="evidence" value="ECO:0007669"/>
    <property type="project" value="UniProtKB-UniRule"/>
</dbReference>
<dbReference type="GO" id="GO:0006212">
    <property type="term" value="P:uracil catabolic process"/>
    <property type="evidence" value="ECO:0007669"/>
    <property type="project" value="UniProtKB-UniRule"/>
</dbReference>
<dbReference type="CDD" id="cd00431">
    <property type="entry name" value="cysteine_hydrolases"/>
    <property type="match status" value="1"/>
</dbReference>
<dbReference type="FunFam" id="3.40.50.850:FF:000004">
    <property type="entry name" value="Peroxyureidoacrylate/ureidoacrylate amidohydrolase RutB"/>
    <property type="match status" value="1"/>
</dbReference>
<dbReference type="Gene3D" id="3.40.50.850">
    <property type="entry name" value="Isochorismatase-like"/>
    <property type="match status" value="1"/>
</dbReference>
<dbReference type="HAMAP" id="MF_00830">
    <property type="entry name" value="RutB"/>
    <property type="match status" value="1"/>
</dbReference>
<dbReference type="InterPro" id="IPR000868">
    <property type="entry name" value="Isochorismatase-like_dom"/>
</dbReference>
<dbReference type="InterPro" id="IPR050272">
    <property type="entry name" value="Isochorismatase-like_hydrls"/>
</dbReference>
<dbReference type="InterPro" id="IPR036380">
    <property type="entry name" value="Isochorismatase-like_sf"/>
</dbReference>
<dbReference type="InterPro" id="IPR019916">
    <property type="entry name" value="RutB"/>
</dbReference>
<dbReference type="NCBIfam" id="TIGR03614">
    <property type="entry name" value="RutB"/>
    <property type="match status" value="1"/>
</dbReference>
<dbReference type="PANTHER" id="PTHR43540:SF6">
    <property type="entry name" value="ISOCHORISMATASE-LIKE DOMAIN-CONTAINING PROTEIN"/>
    <property type="match status" value="1"/>
</dbReference>
<dbReference type="PANTHER" id="PTHR43540">
    <property type="entry name" value="PEROXYUREIDOACRYLATE/UREIDOACRYLATE AMIDOHYDROLASE-RELATED"/>
    <property type="match status" value="1"/>
</dbReference>
<dbReference type="Pfam" id="PF00857">
    <property type="entry name" value="Isochorismatase"/>
    <property type="match status" value="1"/>
</dbReference>
<dbReference type="SUPFAM" id="SSF52499">
    <property type="entry name" value="Isochorismatase-like hydrolases"/>
    <property type="match status" value="1"/>
</dbReference>
<keyword id="KW-0378">Hydrolase</keyword>
<keyword id="KW-1185">Reference proteome</keyword>
<accession>Q8FJ42</accession>
<reference key="1">
    <citation type="journal article" date="2002" name="Proc. Natl. Acad. Sci. U.S.A.">
        <title>Extensive mosaic structure revealed by the complete genome sequence of uropathogenic Escherichia coli.</title>
        <authorList>
            <person name="Welch R.A."/>
            <person name="Burland V."/>
            <person name="Plunkett G. III"/>
            <person name="Redford P."/>
            <person name="Roesch P."/>
            <person name="Rasko D."/>
            <person name="Buckles E.L."/>
            <person name="Liou S.-R."/>
            <person name="Boutin A."/>
            <person name="Hackett J."/>
            <person name="Stroud D."/>
            <person name="Mayhew G.F."/>
            <person name="Rose D.J."/>
            <person name="Zhou S."/>
            <person name="Schwartz D.C."/>
            <person name="Perna N.T."/>
            <person name="Mobley H.L.T."/>
            <person name="Donnenberg M.S."/>
            <person name="Blattner F.R."/>
        </authorList>
    </citation>
    <scope>NUCLEOTIDE SEQUENCE [LARGE SCALE GENOMIC DNA]</scope>
    <source>
        <strain>CFT073 / ATCC 700928 / UPEC</strain>
    </source>
</reference>
<evidence type="ECO:0000255" key="1">
    <source>
        <dbReference type="HAMAP-Rule" id="MF_00830"/>
    </source>
</evidence>